<organism>
    <name type="scientific">Ruegeria pomeroyi (strain ATCC 700808 / DSM 15171 / DSS-3)</name>
    <name type="common">Silicibacter pomeroyi</name>
    <dbReference type="NCBI Taxonomy" id="246200"/>
    <lineage>
        <taxon>Bacteria</taxon>
        <taxon>Pseudomonadati</taxon>
        <taxon>Pseudomonadota</taxon>
        <taxon>Alphaproteobacteria</taxon>
        <taxon>Rhodobacterales</taxon>
        <taxon>Roseobacteraceae</taxon>
        <taxon>Ruegeria</taxon>
    </lineage>
</organism>
<reference key="1">
    <citation type="journal article" date="2004" name="Nature">
        <title>Genome sequence of Silicibacter pomeroyi reveals adaptations to the marine environment.</title>
        <authorList>
            <person name="Moran M.A."/>
            <person name="Buchan A."/>
            <person name="Gonzalez J.M."/>
            <person name="Heidelberg J.F."/>
            <person name="Whitman W.B."/>
            <person name="Kiene R.P."/>
            <person name="Henriksen J.R."/>
            <person name="King G.M."/>
            <person name="Belas R."/>
            <person name="Fuqua C."/>
            <person name="Brinkac L.M."/>
            <person name="Lewis M."/>
            <person name="Johri S."/>
            <person name="Weaver B."/>
            <person name="Pai G."/>
            <person name="Eisen J.A."/>
            <person name="Rahe E."/>
            <person name="Sheldon W.M."/>
            <person name="Ye W."/>
            <person name="Miller T.R."/>
            <person name="Carlton J."/>
            <person name="Rasko D.A."/>
            <person name="Paulsen I.T."/>
            <person name="Ren Q."/>
            <person name="Daugherty S.C."/>
            <person name="DeBoy R.T."/>
            <person name="Dodson R.J."/>
            <person name="Durkin A.S."/>
            <person name="Madupu R."/>
            <person name="Nelson W.C."/>
            <person name="Sullivan S.A."/>
            <person name="Rosovitz M.J."/>
            <person name="Haft D.H."/>
            <person name="Selengut J."/>
            <person name="Ward N."/>
        </authorList>
    </citation>
    <scope>NUCLEOTIDE SEQUENCE [LARGE SCALE GENOMIC DNA]</scope>
    <source>
        <strain>ATCC 700808 / DSM 15171 / DSS-3</strain>
    </source>
</reference>
<reference key="2">
    <citation type="journal article" date="2014" name="Stand. Genomic Sci.">
        <title>An updated genome annotation for the model marine bacterium Ruegeria pomeroyi DSS-3.</title>
        <authorList>
            <person name="Rivers A.R."/>
            <person name="Smith C.B."/>
            <person name="Moran M.A."/>
        </authorList>
    </citation>
    <scope>GENOME REANNOTATION</scope>
    <source>
        <strain>ATCC 700808 / DSM 15171 / DSS-3</strain>
    </source>
</reference>
<accession>Q5LMW7</accession>
<keyword id="KW-0067">ATP-binding</keyword>
<keyword id="KW-0418">Kinase</keyword>
<keyword id="KW-0441">Lipid A biosynthesis</keyword>
<keyword id="KW-0444">Lipid biosynthesis</keyword>
<keyword id="KW-0443">Lipid metabolism</keyword>
<keyword id="KW-0547">Nucleotide-binding</keyword>
<keyword id="KW-1185">Reference proteome</keyword>
<keyword id="KW-0808">Transferase</keyword>
<comment type="function">
    <text evidence="1">Transfers the gamma-phosphate of ATP to the 4'-position of a tetraacyldisaccharide 1-phosphate intermediate (termed DS-1-P) to form tetraacyldisaccharide 1,4'-bis-phosphate (lipid IVA).</text>
</comment>
<comment type="catalytic activity">
    <reaction evidence="1">
        <text>a lipid A disaccharide + ATP = a lipid IVA + ADP + H(+)</text>
        <dbReference type="Rhea" id="RHEA:67840"/>
        <dbReference type="ChEBI" id="CHEBI:15378"/>
        <dbReference type="ChEBI" id="CHEBI:30616"/>
        <dbReference type="ChEBI" id="CHEBI:176343"/>
        <dbReference type="ChEBI" id="CHEBI:176425"/>
        <dbReference type="ChEBI" id="CHEBI:456216"/>
        <dbReference type="EC" id="2.7.1.130"/>
    </reaction>
</comment>
<comment type="pathway">
    <text evidence="1">Glycolipid biosynthesis; lipid IV(A) biosynthesis; lipid IV(A) from (3R)-3-hydroxytetradecanoyl-[acyl-carrier-protein] and UDP-N-acetyl-alpha-D-glucosamine: step 6/6.</text>
</comment>
<comment type="similarity">
    <text evidence="1">Belongs to the LpxK family.</text>
</comment>
<protein>
    <recommendedName>
        <fullName evidence="1">Tetraacyldisaccharide 4'-kinase</fullName>
        <ecNumber evidence="1">2.7.1.130</ecNumber>
    </recommendedName>
    <alternativeName>
        <fullName evidence="1">Lipid A 4'-kinase</fullName>
    </alternativeName>
</protein>
<sequence>MRAPEFWQNDPAHPGWQSRLLAPLGALYARATARRLAKGDPVSVPVPVICIGNLNAGGTGKTPSAIWVAERLRDAGHEPHVVTRGYGGTLEGPVQVDPRRHRAEQVGDEPLLLAAFAEVWVAKDRAAGTRAAAAAGASVIILDDGFQNPSVAKDLSIVVVDAAQGFGNGRCIPAGPLREPVATGLARADLVLALGDAQAQEQFRDTWGAALSVPLVTAELKPLRTGMDWAATPVLAFAGIGNPAKFFRTLRAEGADLRRAEALDDHQPLTPALMTRLENEARLLGAQLVTTEKDAVRLPPAFRSKVITLPVRLEVAEEDRLRAILLAAAPPPP</sequence>
<evidence type="ECO:0000255" key="1">
    <source>
        <dbReference type="HAMAP-Rule" id="MF_00409"/>
    </source>
</evidence>
<feature type="chain" id="PRO_0000229983" description="Tetraacyldisaccharide 4'-kinase">
    <location>
        <begin position="1"/>
        <end position="333"/>
    </location>
</feature>
<feature type="binding site" evidence="1">
    <location>
        <begin position="55"/>
        <end position="62"/>
    </location>
    <ligand>
        <name>ATP</name>
        <dbReference type="ChEBI" id="CHEBI:30616"/>
    </ligand>
</feature>
<dbReference type="EC" id="2.7.1.130" evidence="1"/>
<dbReference type="EMBL" id="CP000031">
    <property type="protein sequence ID" value="AAV96671.1"/>
    <property type="molecule type" value="Genomic_DNA"/>
</dbReference>
<dbReference type="RefSeq" id="WP_011049128.1">
    <property type="nucleotide sequence ID" value="NC_003911.12"/>
</dbReference>
<dbReference type="SMR" id="Q5LMW7"/>
<dbReference type="STRING" id="246200.SPO3445"/>
<dbReference type="PaxDb" id="246200-SPO3445"/>
<dbReference type="KEGG" id="sil:SPO3445"/>
<dbReference type="eggNOG" id="COG1663">
    <property type="taxonomic scope" value="Bacteria"/>
</dbReference>
<dbReference type="HOGENOM" id="CLU_038816_0_0_5"/>
<dbReference type="OrthoDB" id="9766423at2"/>
<dbReference type="UniPathway" id="UPA00359">
    <property type="reaction ID" value="UER00482"/>
</dbReference>
<dbReference type="Proteomes" id="UP000001023">
    <property type="component" value="Chromosome"/>
</dbReference>
<dbReference type="GO" id="GO:0005886">
    <property type="term" value="C:plasma membrane"/>
    <property type="evidence" value="ECO:0007669"/>
    <property type="project" value="TreeGrafter"/>
</dbReference>
<dbReference type="GO" id="GO:0005524">
    <property type="term" value="F:ATP binding"/>
    <property type="evidence" value="ECO:0007669"/>
    <property type="project" value="UniProtKB-UniRule"/>
</dbReference>
<dbReference type="GO" id="GO:0009029">
    <property type="term" value="F:tetraacyldisaccharide 4'-kinase activity"/>
    <property type="evidence" value="ECO:0007669"/>
    <property type="project" value="UniProtKB-UniRule"/>
</dbReference>
<dbReference type="GO" id="GO:0009245">
    <property type="term" value="P:lipid A biosynthetic process"/>
    <property type="evidence" value="ECO:0007669"/>
    <property type="project" value="UniProtKB-UniRule"/>
</dbReference>
<dbReference type="GO" id="GO:0009244">
    <property type="term" value="P:lipopolysaccharide core region biosynthetic process"/>
    <property type="evidence" value="ECO:0007669"/>
    <property type="project" value="TreeGrafter"/>
</dbReference>
<dbReference type="HAMAP" id="MF_00409">
    <property type="entry name" value="LpxK"/>
    <property type="match status" value="1"/>
</dbReference>
<dbReference type="InterPro" id="IPR003758">
    <property type="entry name" value="LpxK"/>
</dbReference>
<dbReference type="InterPro" id="IPR027417">
    <property type="entry name" value="P-loop_NTPase"/>
</dbReference>
<dbReference type="NCBIfam" id="TIGR00682">
    <property type="entry name" value="lpxK"/>
    <property type="match status" value="1"/>
</dbReference>
<dbReference type="PANTHER" id="PTHR42724">
    <property type="entry name" value="TETRAACYLDISACCHARIDE 4'-KINASE"/>
    <property type="match status" value="1"/>
</dbReference>
<dbReference type="PANTHER" id="PTHR42724:SF1">
    <property type="entry name" value="TETRAACYLDISACCHARIDE 4'-KINASE, MITOCHONDRIAL-RELATED"/>
    <property type="match status" value="1"/>
</dbReference>
<dbReference type="Pfam" id="PF02606">
    <property type="entry name" value="LpxK"/>
    <property type="match status" value="1"/>
</dbReference>
<dbReference type="SUPFAM" id="SSF52540">
    <property type="entry name" value="P-loop containing nucleoside triphosphate hydrolases"/>
    <property type="match status" value="1"/>
</dbReference>
<gene>
    <name evidence="1" type="primary">lpxK</name>
    <name type="ordered locus">SPO3445</name>
</gene>
<proteinExistence type="inferred from homology"/>
<name>LPXK_RUEPO</name>